<organism>
    <name type="scientific">Frankia alni (strain DSM 45986 / CECT 9034 / ACN14a)</name>
    <dbReference type="NCBI Taxonomy" id="326424"/>
    <lineage>
        <taxon>Bacteria</taxon>
        <taxon>Bacillati</taxon>
        <taxon>Actinomycetota</taxon>
        <taxon>Actinomycetes</taxon>
        <taxon>Frankiales</taxon>
        <taxon>Frankiaceae</taxon>
        <taxon>Frankia</taxon>
    </lineage>
</organism>
<evidence type="ECO:0000255" key="1">
    <source>
        <dbReference type="HAMAP-Rule" id="MF_00480"/>
    </source>
</evidence>
<evidence type="ECO:0000305" key="2"/>
<reference key="1">
    <citation type="journal article" date="2007" name="Genome Res.">
        <title>Genome characteristics of facultatively symbiotic Frankia sp. strains reflect host range and host plant biogeography.</title>
        <authorList>
            <person name="Normand P."/>
            <person name="Lapierre P."/>
            <person name="Tisa L.S."/>
            <person name="Gogarten J.P."/>
            <person name="Alloisio N."/>
            <person name="Bagnarol E."/>
            <person name="Bassi C.A."/>
            <person name="Berry A.M."/>
            <person name="Bickhart D.M."/>
            <person name="Choisne N."/>
            <person name="Couloux A."/>
            <person name="Cournoyer B."/>
            <person name="Cruveiller S."/>
            <person name="Daubin V."/>
            <person name="Demange N."/>
            <person name="Francino M.P."/>
            <person name="Goltsman E."/>
            <person name="Huang Y."/>
            <person name="Kopp O.R."/>
            <person name="Labarre L."/>
            <person name="Lapidus A."/>
            <person name="Lavire C."/>
            <person name="Marechal J."/>
            <person name="Martinez M."/>
            <person name="Mastronunzio J.E."/>
            <person name="Mullin B.C."/>
            <person name="Niemann J."/>
            <person name="Pujic P."/>
            <person name="Rawnsley T."/>
            <person name="Rouy Z."/>
            <person name="Schenowitz C."/>
            <person name="Sellstedt A."/>
            <person name="Tavares F."/>
            <person name="Tomkins J.P."/>
            <person name="Vallenet D."/>
            <person name="Valverde C."/>
            <person name="Wall L.G."/>
            <person name="Wang Y."/>
            <person name="Medigue C."/>
            <person name="Benson D.R."/>
        </authorList>
    </citation>
    <scope>NUCLEOTIDE SEQUENCE [LARGE SCALE GENOMIC DNA]</scope>
    <source>
        <strain>DSM 45986 / CECT 9034 / ACN14a</strain>
    </source>
</reference>
<dbReference type="EMBL" id="CT573213">
    <property type="protein sequence ID" value="CAJ59742.1"/>
    <property type="molecule type" value="Genomic_DNA"/>
</dbReference>
<dbReference type="RefSeq" id="WP_011602298.1">
    <property type="nucleotide sequence ID" value="NC_008278.1"/>
</dbReference>
<dbReference type="SMR" id="Q0RRS5"/>
<dbReference type="STRING" id="326424.FRAAL1077"/>
<dbReference type="KEGG" id="fal:FRAAL1077"/>
<dbReference type="eggNOG" id="COG0049">
    <property type="taxonomic scope" value="Bacteria"/>
</dbReference>
<dbReference type="HOGENOM" id="CLU_072226_1_1_11"/>
<dbReference type="OrthoDB" id="9807653at2"/>
<dbReference type="Proteomes" id="UP000000657">
    <property type="component" value="Chromosome"/>
</dbReference>
<dbReference type="GO" id="GO:0015935">
    <property type="term" value="C:small ribosomal subunit"/>
    <property type="evidence" value="ECO:0007669"/>
    <property type="project" value="InterPro"/>
</dbReference>
<dbReference type="GO" id="GO:0019843">
    <property type="term" value="F:rRNA binding"/>
    <property type="evidence" value="ECO:0007669"/>
    <property type="project" value="UniProtKB-UniRule"/>
</dbReference>
<dbReference type="GO" id="GO:0003735">
    <property type="term" value="F:structural constituent of ribosome"/>
    <property type="evidence" value="ECO:0007669"/>
    <property type="project" value="InterPro"/>
</dbReference>
<dbReference type="GO" id="GO:0000049">
    <property type="term" value="F:tRNA binding"/>
    <property type="evidence" value="ECO:0007669"/>
    <property type="project" value="UniProtKB-UniRule"/>
</dbReference>
<dbReference type="GO" id="GO:0006412">
    <property type="term" value="P:translation"/>
    <property type="evidence" value="ECO:0007669"/>
    <property type="project" value="UniProtKB-UniRule"/>
</dbReference>
<dbReference type="CDD" id="cd14869">
    <property type="entry name" value="uS7_Bacteria"/>
    <property type="match status" value="1"/>
</dbReference>
<dbReference type="FunFam" id="1.10.455.10:FF:000001">
    <property type="entry name" value="30S ribosomal protein S7"/>
    <property type="match status" value="1"/>
</dbReference>
<dbReference type="Gene3D" id="1.10.455.10">
    <property type="entry name" value="Ribosomal protein S7 domain"/>
    <property type="match status" value="1"/>
</dbReference>
<dbReference type="HAMAP" id="MF_00480_B">
    <property type="entry name" value="Ribosomal_uS7_B"/>
    <property type="match status" value="1"/>
</dbReference>
<dbReference type="InterPro" id="IPR000235">
    <property type="entry name" value="Ribosomal_uS7"/>
</dbReference>
<dbReference type="InterPro" id="IPR005717">
    <property type="entry name" value="Ribosomal_uS7_bac/org-type"/>
</dbReference>
<dbReference type="InterPro" id="IPR020606">
    <property type="entry name" value="Ribosomal_uS7_CS"/>
</dbReference>
<dbReference type="InterPro" id="IPR023798">
    <property type="entry name" value="Ribosomal_uS7_dom"/>
</dbReference>
<dbReference type="InterPro" id="IPR036823">
    <property type="entry name" value="Ribosomal_uS7_dom_sf"/>
</dbReference>
<dbReference type="NCBIfam" id="TIGR01029">
    <property type="entry name" value="rpsG_bact"/>
    <property type="match status" value="1"/>
</dbReference>
<dbReference type="PANTHER" id="PTHR11205">
    <property type="entry name" value="RIBOSOMAL PROTEIN S7"/>
    <property type="match status" value="1"/>
</dbReference>
<dbReference type="Pfam" id="PF00177">
    <property type="entry name" value="Ribosomal_S7"/>
    <property type="match status" value="1"/>
</dbReference>
<dbReference type="PIRSF" id="PIRSF002122">
    <property type="entry name" value="RPS7p_RPS7a_RPS5e_RPS7o"/>
    <property type="match status" value="1"/>
</dbReference>
<dbReference type="SUPFAM" id="SSF47973">
    <property type="entry name" value="Ribosomal protein S7"/>
    <property type="match status" value="1"/>
</dbReference>
<dbReference type="PROSITE" id="PS00052">
    <property type="entry name" value="RIBOSOMAL_S7"/>
    <property type="match status" value="1"/>
</dbReference>
<protein>
    <recommendedName>
        <fullName evidence="1">Small ribosomal subunit protein uS7</fullName>
    </recommendedName>
    <alternativeName>
        <fullName evidence="2">30S ribosomal protein S7</fullName>
    </alternativeName>
</protein>
<comment type="function">
    <text evidence="1">One of the primary rRNA binding proteins, it binds directly to 16S rRNA where it nucleates assembly of the head domain of the 30S subunit. Is located at the subunit interface close to the decoding center, probably blocks exit of the E-site tRNA.</text>
</comment>
<comment type="subunit">
    <text evidence="1">Part of the 30S ribosomal subunit. Contacts proteins S9 and S11.</text>
</comment>
<comment type="similarity">
    <text evidence="1">Belongs to the universal ribosomal protein uS7 family.</text>
</comment>
<keyword id="KW-1185">Reference proteome</keyword>
<keyword id="KW-0687">Ribonucleoprotein</keyword>
<keyword id="KW-0689">Ribosomal protein</keyword>
<keyword id="KW-0694">RNA-binding</keyword>
<keyword id="KW-0699">rRNA-binding</keyword>
<keyword id="KW-0820">tRNA-binding</keyword>
<gene>
    <name evidence="1" type="primary">rpsG</name>
    <name type="ordered locus">FRAAL1077</name>
</gene>
<name>RS7_FRAAA</name>
<accession>Q0RRS5</accession>
<feature type="chain" id="PRO_1000014192" description="Small ribosomal subunit protein uS7">
    <location>
        <begin position="1"/>
        <end position="156"/>
    </location>
</feature>
<proteinExistence type="inferred from homology"/>
<sequence>MPRKGPAPKHAVVVDPVYGSALVTALVNKVLMSGKKSVAERIVYGALEGAKNKTGNDPVVTLKRALDNVKPTLEVRSRRVGGATYQVPVEVRAGRSTTLALRWIVGYSRARREKTMTERLMNELIDASNGLGASVKRREDTHKMAESNKAFAHYRW</sequence>